<gene>
    <name type="primary">TIM50</name>
    <name type="ordered locus">KLLA0E23188g</name>
</gene>
<accession>Q6CM45</accession>
<keyword id="KW-0472">Membrane</keyword>
<keyword id="KW-0496">Mitochondrion</keyword>
<keyword id="KW-0999">Mitochondrion inner membrane</keyword>
<keyword id="KW-0653">Protein transport</keyword>
<keyword id="KW-1185">Reference proteome</keyword>
<keyword id="KW-0809">Transit peptide</keyword>
<keyword id="KW-0811">Translocation</keyword>
<keyword id="KW-0812">Transmembrane</keyword>
<keyword id="KW-1133">Transmembrane helix</keyword>
<keyword id="KW-0813">Transport</keyword>
<evidence type="ECO:0000250" key="1"/>
<evidence type="ECO:0000255" key="2"/>
<evidence type="ECO:0000255" key="3">
    <source>
        <dbReference type="PROSITE-ProRule" id="PRU00336"/>
    </source>
</evidence>
<evidence type="ECO:0000256" key="4">
    <source>
        <dbReference type="SAM" id="MobiDB-lite"/>
    </source>
</evidence>
<evidence type="ECO:0000305" key="5"/>
<reference key="1">
    <citation type="journal article" date="2004" name="Nature">
        <title>Genome evolution in yeasts.</title>
        <authorList>
            <person name="Dujon B."/>
            <person name="Sherman D."/>
            <person name="Fischer G."/>
            <person name="Durrens P."/>
            <person name="Casaregola S."/>
            <person name="Lafontaine I."/>
            <person name="de Montigny J."/>
            <person name="Marck C."/>
            <person name="Neuveglise C."/>
            <person name="Talla E."/>
            <person name="Goffard N."/>
            <person name="Frangeul L."/>
            <person name="Aigle M."/>
            <person name="Anthouard V."/>
            <person name="Babour A."/>
            <person name="Barbe V."/>
            <person name="Barnay S."/>
            <person name="Blanchin S."/>
            <person name="Beckerich J.-M."/>
            <person name="Beyne E."/>
            <person name="Bleykasten C."/>
            <person name="Boisrame A."/>
            <person name="Boyer J."/>
            <person name="Cattolico L."/>
            <person name="Confanioleri F."/>
            <person name="de Daruvar A."/>
            <person name="Despons L."/>
            <person name="Fabre E."/>
            <person name="Fairhead C."/>
            <person name="Ferry-Dumazet H."/>
            <person name="Groppi A."/>
            <person name="Hantraye F."/>
            <person name="Hennequin C."/>
            <person name="Jauniaux N."/>
            <person name="Joyet P."/>
            <person name="Kachouri R."/>
            <person name="Kerrest A."/>
            <person name="Koszul R."/>
            <person name="Lemaire M."/>
            <person name="Lesur I."/>
            <person name="Ma L."/>
            <person name="Muller H."/>
            <person name="Nicaud J.-M."/>
            <person name="Nikolski M."/>
            <person name="Oztas S."/>
            <person name="Ozier-Kalogeropoulos O."/>
            <person name="Pellenz S."/>
            <person name="Potier S."/>
            <person name="Richard G.-F."/>
            <person name="Straub M.-L."/>
            <person name="Suleau A."/>
            <person name="Swennen D."/>
            <person name="Tekaia F."/>
            <person name="Wesolowski-Louvel M."/>
            <person name="Westhof E."/>
            <person name="Wirth B."/>
            <person name="Zeniou-Meyer M."/>
            <person name="Zivanovic Y."/>
            <person name="Bolotin-Fukuhara M."/>
            <person name="Thierry A."/>
            <person name="Bouchier C."/>
            <person name="Caudron B."/>
            <person name="Scarpelli C."/>
            <person name="Gaillardin C."/>
            <person name="Weissenbach J."/>
            <person name="Wincker P."/>
            <person name="Souciet J.-L."/>
        </authorList>
    </citation>
    <scope>NUCLEOTIDE SEQUENCE [LARGE SCALE GENOMIC DNA]</scope>
    <source>
        <strain>ATCC 8585 / CBS 2359 / DSM 70799 / NBRC 1267 / NRRL Y-1140 / WM37</strain>
    </source>
</reference>
<proteinExistence type="inferred from homology"/>
<sequence length="480" mass="55467">MLSIARVSLLRNARMVPVHAMQMRPVVVRRSLHNGSLLLQKKNEKNEAPKSILDDDMLARAGVEVEGNEAGSKDKSGRAGEAGESAEQDDSTGDKGSGKKKRSRKSSTDIKRERYANWFYILSLLGLASGALSMARDWDSDESEELKKEIPNGYTPALMYKRMKRRWESIFTFFQEPPFPDLLPPPPPPPYQRPLTLVLSLEDLLVHSEWTQQSGWRTAKRPGVDYFLGYLSQYYEIVLFSSNYMMYAEKIAEKLDPIHAFITYNLFKEHCLYKDGVHIKDLSKLNRDLGKVLIIDTDENSFKLQPENAIYLEPWDGKADDRLLRLIPFLEYLATQQVSDVRPILKSFPDNKNIPEAFEKRVQVLKEKFERDERVKNDKNLFLKLLGIGLIGTKPKFPLDLIREEGEKNYVRFMKLVEEEKEKIKLQQQAMGQQTFTLKDYVEGNIPTPEEQLKLQMEKQQEIEAQFEEQKKLKAQQGSK</sequence>
<name>TIM50_KLULA</name>
<dbReference type="EMBL" id="CR382125">
    <property type="protein sequence ID" value="CAH00081.1"/>
    <property type="molecule type" value="Genomic_DNA"/>
</dbReference>
<dbReference type="RefSeq" id="XP_454994.1">
    <property type="nucleotide sequence ID" value="XM_454994.1"/>
</dbReference>
<dbReference type="SMR" id="Q6CM45"/>
<dbReference type="FunCoup" id="Q6CM45">
    <property type="interactions" value="493"/>
</dbReference>
<dbReference type="STRING" id="284590.Q6CM45"/>
<dbReference type="PaxDb" id="284590-Q6CM45"/>
<dbReference type="KEGG" id="kla:KLLA0_E23101g"/>
<dbReference type="eggNOG" id="KOG2832">
    <property type="taxonomic scope" value="Eukaryota"/>
</dbReference>
<dbReference type="HOGENOM" id="CLU_023309_1_2_1"/>
<dbReference type="InParanoid" id="Q6CM45"/>
<dbReference type="OMA" id="RDRSEYV"/>
<dbReference type="Proteomes" id="UP000000598">
    <property type="component" value="Chromosome E"/>
</dbReference>
<dbReference type="GO" id="GO:0005743">
    <property type="term" value="C:mitochondrial inner membrane"/>
    <property type="evidence" value="ECO:0007669"/>
    <property type="project" value="UniProtKB-SubCell"/>
</dbReference>
<dbReference type="GO" id="GO:0015031">
    <property type="term" value="P:protein transport"/>
    <property type="evidence" value="ECO:0007669"/>
    <property type="project" value="UniProtKB-KW"/>
</dbReference>
<dbReference type="CDD" id="cd07521">
    <property type="entry name" value="HAD_FCP1-like"/>
    <property type="match status" value="1"/>
</dbReference>
<dbReference type="FunFam" id="3.40.50.1000:FF:000019">
    <property type="entry name" value="Mitochondrial import inner membrane translocase subunit TIM50"/>
    <property type="match status" value="1"/>
</dbReference>
<dbReference type="Gene3D" id="3.40.50.1000">
    <property type="entry name" value="HAD superfamily/HAD-like"/>
    <property type="match status" value="1"/>
</dbReference>
<dbReference type="InterPro" id="IPR004274">
    <property type="entry name" value="FCP1_dom"/>
</dbReference>
<dbReference type="InterPro" id="IPR036412">
    <property type="entry name" value="HAD-like_sf"/>
</dbReference>
<dbReference type="InterPro" id="IPR023214">
    <property type="entry name" value="HAD_sf"/>
</dbReference>
<dbReference type="InterPro" id="IPR050365">
    <property type="entry name" value="TIM50"/>
</dbReference>
<dbReference type="PANTHER" id="PTHR12210">
    <property type="entry name" value="DULLARD PROTEIN PHOSPHATASE"/>
    <property type="match status" value="1"/>
</dbReference>
<dbReference type="Pfam" id="PF03031">
    <property type="entry name" value="NIF"/>
    <property type="match status" value="1"/>
</dbReference>
<dbReference type="SMART" id="SM00577">
    <property type="entry name" value="CPDc"/>
    <property type="match status" value="1"/>
</dbReference>
<dbReference type="SUPFAM" id="SSF56784">
    <property type="entry name" value="HAD-like"/>
    <property type="match status" value="1"/>
</dbReference>
<dbReference type="PROSITE" id="PS50969">
    <property type="entry name" value="FCP1"/>
    <property type="match status" value="1"/>
</dbReference>
<protein>
    <recommendedName>
        <fullName>Mitochondrial import inner membrane translocase subunit TIM50</fullName>
    </recommendedName>
</protein>
<feature type="transit peptide" description="Mitochondrion" evidence="2">
    <location>
        <begin position="1"/>
        <end position="39"/>
    </location>
</feature>
<feature type="chain" id="PRO_0000043133" description="Mitochondrial import inner membrane translocase subunit TIM50">
    <location>
        <begin position="40"/>
        <end position="480"/>
    </location>
</feature>
<feature type="topological domain" description="Mitochondrial matrix" evidence="2">
    <location>
        <begin position="40"/>
        <end position="118"/>
    </location>
</feature>
<feature type="transmembrane region" description="Helical" evidence="2">
    <location>
        <begin position="119"/>
        <end position="135"/>
    </location>
</feature>
<feature type="topological domain" description="Mitochondrial intermembrane" evidence="2">
    <location>
        <begin position="136"/>
        <end position="480"/>
    </location>
</feature>
<feature type="domain" description="FCP1 homology" evidence="3">
    <location>
        <begin position="190"/>
        <end position="333"/>
    </location>
</feature>
<feature type="region of interest" description="Disordered" evidence="4">
    <location>
        <begin position="63"/>
        <end position="107"/>
    </location>
</feature>
<comment type="function">
    <text evidence="1">Essential component of the TIM23 complex, a complex that mediates the translocation of transit peptide-containing proteins across the mitochondrial inner membrane. Required to direct preproteins in transit and direct them to the channel protein TIM23, and possibly facilitates transfer of the translocating proteins from the TOM complex to the TIM23 complex (By similarity).</text>
</comment>
<comment type="subunit">
    <text evidence="1">Component of the TIM23 complex, at least composed of TIM23, TIM17, TIM50 and TIM21. Interacts with preproteins in transit (By similarity).</text>
</comment>
<comment type="subcellular location">
    <subcellularLocation>
        <location evidence="1">Mitochondrion inner membrane</location>
        <topology evidence="1">Single-pass membrane protein</topology>
    </subcellularLocation>
</comment>
<comment type="similarity">
    <text evidence="5">Belongs to the TIM50 family.</text>
</comment>
<organism>
    <name type="scientific">Kluyveromyces lactis (strain ATCC 8585 / CBS 2359 / DSM 70799 / NBRC 1267 / NRRL Y-1140 / WM37)</name>
    <name type="common">Yeast</name>
    <name type="synonym">Candida sphaerica</name>
    <dbReference type="NCBI Taxonomy" id="284590"/>
    <lineage>
        <taxon>Eukaryota</taxon>
        <taxon>Fungi</taxon>
        <taxon>Dikarya</taxon>
        <taxon>Ascomycota</taxon>
        <taxon>Saccharomycotina</taxon>
        <taxon>Saccharomycetes</taxon>
        <taxon>Saccharomycetales</taxon>
        <taxon>Saccharomycetaceae</taxon>
        <taxon>Kluyveromyces</taxon>
    </lineage>
</organism>